<dbReference type="EMBL" id="U32445">
    <property type="protein sequence ID" value="AAB68084.1"/>
    <property type="molecule type" value="Genomic_DNA"/>
</dbReference>
<dbReference type="EMBL" id="AY692600">
    <property type="protein sequence ID" value="AAT92619.1"/>
    <property type="molecule type" value="Genomic_DNA"/>
</dbReference>
<dbReference type="EMBL" id="BK006949">
    <property type="protein sequence ID" value="DAA11529.1"/>
    <property type="molecule type" value="Genomic_DNA"/>
</dbReference>
<dbReference type="PIR" id="S59779">
    <property type="entry name" value="S59779"/>
</dbReference>
<dbReference type="RefSeq" id="NP_015439.1">
    <property type="nucleotide sequence ID" value="NM_001184211.1"/>
</dbReference>
<dbReference type="BioGRID" id="36281">
    <property type="interactions" value="67"/>
</dbReference>
<dbReference type="DIP" id="DIP-5054N"/>
<dbReference type="FunCoup" id="Q06107">
    <property type="interactions" value="116"/>
</dbReference>
<dbReference type="IntAct" id="Q06107">
    <property type="interactions" value="11"/>
</dbReference>
<dbReference type="MINT" id="Q06107"/>
<dbReference type="STRING" id="4932.YPR114W"/>
<dbReference type="PaxDb" id="4932-YPR114W"/>
<dbReference type="PeptideAtlas" id="Q06107"/>
<dbReference type="TopDownProteomics" id="Q06107"/>
<dbReference type="EnsemblFungi" id="YPR114W_mRNA">
    <property type="protein sequence ID" value="YPR114W"/>
    <property type="gene ID" value="YPR114W"/>
</dbReference>
<dbReference type="GeneID" id="856230"/>
<dbReference type="KEGG" id="sce:YPR114W"/>
<dbReference type="AGR" id="SGD:S000006318"/>
<dbReference type="SGD" id="S000006318">
    <property type="gene designation" value="YPR114W"/>
</dbReference>
<dbReference type="VEuPathDB" id="FungiDB:YPR114W"/>
<dbReference type="eggNOG" id="KOG4561">
    <property type="taxonomic scope" value="Eukaryota"/>
</dbReference>
<dbReference type="GeneTree" id="ENSGT01010000222313"/>
<dbReference type="HOGENOM" id="CLU_034597_0_1_1"/>
<dbReference type="InParanoid" id="Q06107"/>
<dbReference type="OMA" id="AIGYFLW"/>
<dbReference type="OrthoDB" id="10266980at2759"/>
<dbReference type="BioCyc" id="YEAST:G3O-34253-MONOMER"/>
<dbReference type="BioGRID-ORCS" id="856230">
    <property type="hits" value="2 hits in 10 CRISPR screens"/>
</dbReference>
<dbReference type="PRO" id="PR:Q06107"/>
<dbReference type="Proteomes" id="UP000002311">
    <property type="component" value="Chromosome XVI"/>
</dbReference>
<dbReference type="RNAct" id="Q06107">
    <property type="molecule type" value="protein"/>
</dbReference>
<dbReference type="GO" id="GO:0005783">
    <property type="term" value="C:endoplasmic reticulum"/>
    <property type="evidence" value="ECO:0007005"/>
    <property type="project" value="SGD"/>
</dbReference>
<dbReference type="GO" id="GO:0005789">
    <property type="term" value="C:endoplasmic reticulum membrane"/>
    <property type="evidence" value="ECO:0007669"/>
    <property type="project" value="UniProtKB-SubCell"/>
</dbReference>
<dbReference type="GO" id="GO:0055088">
    <property type="term" value="P:lipid homeostasis"/>
    <property type="evidence" value="ECO:0000318"/>
    <property type="project" value="GO_Central"/>
</dbReference>
<dbReference type="InterPro" id="IPR006634">
    <property type="entry name" value="TLC-dom"/>
</dbReference>
<dbReference type="InterPro" id="IPR050846">
    <property type="entry name" value="TLCD"/>
</dbReference>
<dbReference type="PANTHER" id="PTHR13439:SF6">
    <property type="entry name" value="AAR085WP"/>
    <property type="match status" value="1"/>
</dbReference>
<dbReference type="PANTHER" id="PTHR13439">
    <property type="entry name" value="CT120 PROTEIN"/>
    <property type="match status" value="1"/>
</dbReference>
<dbReference type="Pfam" id="PF03798">
    <property type="entry name" value="TRAM_LAG1_CLN8"/>
    <property type="match status" value="1"/>
</dbReference>
<dbReference type="SMART" id="SM00724">
    <property type="entry name" value="TLC"/>
    <property type="match status" value="1"/>
</dbReference>
<dbReference type="PROSITE" id="PS50922">
    <property type="entry name" value="TLC"/>
    <property type="match status" value="1"/>
</dbReference>
<proteinExistence type="evidence at protein level"/>
<gene>
    <name type="ordered locus">YPR114W</name>
</gene>
<feature type="chain" id="PRO_0000242487" description="Uncharacterized TLC domain-containing protein YPR114W">
    <location>
        <begin position="1"/>
        <end position="315"/>
    </location>
</feature>
<feature type="topological domain" description="Cytoplasmic" evidence="1">
    <location>
        <begin position="1"/>
        <end position="38"/>
    </location>
</feature>
<feature type="transmembrane region" description="Helical" evidence="1">
    <location>
        <begin position="39"/>
        <end position="59"/>
    </location>
</feature>
<feature type="topological domain" description="Lumenal" evidence="1">
    <location>
        <begin position="60"/>
        <end position="101"/>
    </location>
</feature>
<feature type="transmembrane region" description="Helical" evidence="1">
    <location>
        <begin position="102"/>
        <end position="122"/>
    </location>
</feature>
<feature type="topological domain" description="Cytoplasmic" evidence="1">
    <location>
        <begin position="123"/>
        <end position="144"/>
    </location>
</feature>
<feature type="transmembrane region" description="Helical" evidence="1">
    <location>
        <begin position="145"/>
        <end position="165"/>
    </location>
</feature>
<feature type="topological domain" description="Lumenal" evidence="1">
    <location>
        <begin position="166"/>
        <end position="170"/>
    </location>
</feature>
<feature type="transmembrane region" description="Helical" evidence="1">
    <location>
        <begin position="171"/>
        <end position="190"/>
    </location>
</feature>
<feature type="topological domain" description="Cytoplasmic" evidence="1">
    <location>
        <begin position="191"/>
        <end position="225"/>
    </location>
</feature>
<feature type="transmembrane region" description="Helical" evidence="1">
    <location>
        <begin position="226"/>
        <end position="246"/>
    </location>
</feature>
<feature type="topological domain" description="Lumenal" evidence="1">
    <location>
        <begin position="247"/>
        <end position="264"/>
    </location>
</feature>
<feature type="transmembrane region" description="Helical" evidence="1">
    <location>
        <begin position="265"/>
        <end position="285"/>
    </location>
</feature>
<feature type="topological domain" description="Cytoplasmic" evidence="1">
    <location>
        <begin position="286"/>
        <end position="315"/>
    </location>
</feature>
<feature type="domain" description="TLC" evidence="2">
    <location>
        <begin position="95"/>
        <end position="302"/>
    </location>
</feature>
<evidence type="ECO:0000255" key="1"/>
<evidence type="ECO:0000255" key="2">
    <source>
        <dbReference type="PROSITE-ProRule" id="PRU00205"/>
    </source>
</evidence>
<evidence type="ECO:0000269" key="3">
    <source>
    </source>
</evidence>
<evidence type="ECO:0000269" key="4">
    <source>
    </source>
</evidence>
<reference key="1">
    <citation type="journal article" date="1997" name="Nature">
        <title>The nucleotide sequence of Saccharomyces cerevisiae chromosome XVI.</title>
        <authorList>
            <person name="Bussey H."/>
            <person name="Storms R.K."/>
            <person name="Ahmed A."/>
            <person name="Albermann K."/>
            <person name="Allen E."/>
            <person name="Ansorge W."/>
            <person name="Araujo R."/>
            <person name="Aparicio A."/>
            <person name="Barrell B.G."/>
            <person name="Badcock K."/>
            <person name="Benes V."/>
            <person name="Botstein D."/>
            <person name="Bowman S."/>
            <person name="Brueckner M."/>
            <person name="Carpenter J."/>
            <person name="Cherry J.M."/>
            <person name="Chung E."/>
            <person name="Churcher C.M."/>
            <person name="Coster F."/>
            <person name="Davis K."/>
            <person name="Davis R.W."/>
            <person name="Dietrich F.S."/>
            <person name="Delius H."/>
            <person name="DiPaolo T."/>
            <person name="Dubois E."/>
            <person name="Duesterhoeft A."/>
            <person name="Duncan M."/>
            <person name="Floeth M."/>
            <person name="Fortin N."/>
            <person name="Friesen J.D."/>
            <person name="Fritz C."/>
            <person name="Goffeau A."/>
            <person name="Hall J."/>
            <person name="Hebling U."/>
            <person name="Heumann K."/>
            <person name="Hilbert H."/>
            <person name="Hillier L.W."/>
            <person name="Hunicke-Smith S."/>
            <person name="Hyman R.W."/>
            <person name="Johnston M."/>
            <person name="Kalman S."/>
            <person name="Kleine K."/>
            <person name="Komp C."/>
            <person name="Kurdi O."/>
            <person name="Lashkari D."/>
            <person name="Lew H."/>
            <person name="Lin A."/>
            <person name="Lin D."/>
            <person name="Louis E.J."/>
            <person name="Marathe R."/>
            <person name="Messenguy F."/>
            <person name="Mewes H.-W."/>
            <person name="Mirtipati S."/>
            <person name="Moestl D."/>
            <person name="Mueller-Auer S."/>
            <person name="Namath A."/>
            <person name="Nentwich U."/>
            <person name="Oefner P."/>
            <person name="Pearson D."/>
            <person name="Petel F.X."/>
            <person name="Pohl T.M."/>
            <person name="Purnelle B."/>
            <person name="Rajandream M.A."/>
            <person name="Rechmann S."/>
            <person name="Rieger M."/>
            <person name="Riles L."/>
            <person name="Roberts D."/>
            <person name="Schaefer M."/>
            <person name="Scharfe M."/>
            <person name="Scherens B."/>
            <person name="Schramm S."/>
            <person name="Schroeder M."/>
            <person name="Sdicu A.-M."/>
            <person name="Tettelin H."/>
            <person name="Urrestarazu L.A."/>
            <person name="Ushinsky S."/>
            <person name="Vierendeels F."/>
            <person name="Vissers S."/>
            <person name="Voss H."/>
            <person name="Walsh S.V."/>
            <person name="Wambutt R."/>
            <person name="Wang Y."/>
            <person name="Wedler E."/>
            <person name="Wedler H."/>
            <person name="Winnett E."/>
            <person name="Zhong W.-W."/>
            <person name="Zollner A."/>
            <person name="Vo D.H."/>
            <person name="Hani J."/>
        </authorList>
    </citation>
    <scope>NUCLEOTIDE SEQUENCE [LARGE SCALE GENOMIC DNA]</scope>
    <source>
        <strain>ATCC 204508 / S288c</strain>
    </source>
</reference>
<reference key="2">
    <citation type="journal article" date="2014" name="G3 (Bethesda)">
        <title>The reference genome sequence of Saccharomyces cerevisiae: Then and now.</title>
        <authorList>
            <person name="Engel S.R."/>
            <person name="Dietrich F.S."/>
            <person name="Fisk D.G."/>
            <person name="Binkley G."/>
            <person name="Balakrishnan R."/>
            <person name="Costanzo M.C."/>
            <person name="Dwight S.S."/>
            <person name="Hitz B.C."/>
            <person name="Karra K."/>
            <person name="Nash R.S."/>
            <person name="Weng S."/>
            <person name="Wong E.D."/>
            <person name="Lloyd P."/>
            <person name="Skrzypek M.S."/>
            <person name="Miyasato S.R."/>
            <person name="Simison M."/>
            <person name="Cherry J.M."/>
        </authorList>
    </citation>
    <scope>GENOME REANNOTATION</scope>
    <source>
        <strain>ATCC 204508 / S288c</strain>
    </source>
</reference>
<reference key="3">
    <citation type="journal article" date="2007" name="Genome Res.">
        <title>Approaching a complete repository of sequence-verified protein-encoding clones for Saccharomyces cerevisiae.</title>
        <authorList>
            <person name="Hu Y."/>
            <person name="Rolfs A."/>
            <person name="Bhullar B."/>
            <person name="Murthy T.V.S."/>
            <person name="Zhu C."/>
            <person name="Berger M.F."/>
            <person name="Camargo A.A."/>
            <person name="Kelley F."/>
            <person name="McCarron S."/>
            <person name="Jepson D."/>
            <person name="Richardson A."/>
            <person name="Raphael J."/>
            <person name="Moreira D."/>
            <person name="Taycher E."/>
            <person name="Zuo D."/>
            <person name="Mohr S."/>
            <person name="Kane M.F."/>
            <person name="Williamson J."/>
            <person name="Simpson A.J.G."/>
            <person name="Bulyk M.L."/>
            <person name="Harlow E."/>
            <person name="Marsischky G."/>
            <person name="Kolodner R.D."/>
            <person name="LaBaer J."/>
        </authorList>
    </citation>
    <scope>NUCLEOTIDE SEQUENCE [GENOMIC DNA]</scope>
    <source>
        <strain>ATCC 204508 / S288c</strain>
    </source>
</reference>
<reference key="4">
    <citation type="journal article" date="2003" name="Nature">
        <title>Global analysis of protein localization in budding yeast.</title>
        <authorList>
            <person name="Huh W.-K."/>
            <person name="Falvo J.V."/>
            <person name="Gerke L.C."/>
            <person name="Carroll A.S."/>
            <person name="Howson R.W."/>
            <person name="Weissman J.S."/>
            <person name="O'Shea E.K."/>
        </authorList>
    </citation>
    <scope>SUBCELLULAR LOCATION [LARGE SCALE ANALYSIS]</scope>
</reference>
<reference key="5">
    <citation type="journal article" date="2003" name="Nature">
        <title>Global analysis of protein expression in yeast.</title>
        <authorList>
            <person name="Ghaemmaghami S."/>
            <person name="Huh W.-K."/>
            <person name="Bower K."/>
            <person name="Howson R.W."/>
            <person name="Belle A."/>
            <person name="Dephoure N."/>
            <person name="O'Shea E.K."/>
            <person name="Weissman J.S."/>
        </authorList>
    </citation>
    <scope>LEVEL OF PROTEIN EXPRESSION [LARGE SCALE ANALYSIS]</scope>
</reference>
<reference key="6">
    <citation type="journal article" date="2006" name="Proc. Natl. Acad. Sci. U.S.A.">
        <title>A global topology map of the Saccharomyces cerevisiae membrane proteome.</title>
        <authorList>
            <person name="Kim H."/>
            <person name="Melen K."/>
            <person name="Oesterberg M."/>
            <person name="von Heijne G."/>
        </authorList>
    </citation>
    <scope>TOPOLOGY [LARGE SCALE ANALYSIS]</scope>
    <source>
        <strain>ATCC 208353 / W303-1A</strain>
    </source>
</reference>
<accession>Q06107</accession>
<accession>D6W4B3</accession>
<keyword id="KW-0256">Endoplasmic reticulum</keyword>
<keyword id="KW-0472">Membrane</keyword>
<keyword id="KW-1185">Reference proteome</keyword>
<keyword id="KW-0812">Transmembrane</keyword>
<keyword id="KW-1133">Transmembrane helix</keyword>
<sequence length="315" mass="36750">MDVLLSLPQPELFKTTVIPFLANRNIIKSEAILSNLHSIFYVAIFYHIWFLFGKWILFPHLVKWKLDYDQKHNVKKDEKTTSERQAQHYKKKYTSLINQSSVHLISLLQSIVVLYYSLKFLLDPKASAEPYQTSHSRVFTENRDTQVICIFAIGYFVWDIYISTMYSTFPFVVHGIISTVVFCIGLKPYIQYYAPVFLMFELSNPSLNFRWFGIKFLPQKSKFCSLLLLLNNLTLMVVFFAARIAWGWFQIGKLCYDFYQVRNEPGFLVFDTIVILAGNFVLDILNVIWFSTMVSVAAKVLKKGESVDKVTKNEQ</sequence>
<name>YP114_YEAST</name>
<organism>
    <name type="scientific">Saccharomyces cerevisiae (strain ATCC 204508 / S288c)</name>
    <name type="common">Baker's yeast</name>
    <dbReference type="NCBI Taxonomy" id="559292"/>
    <lineage>
        <taxon>Eukaryota</taxon>
        <taxon>Fungi</taxon>
        <taxon>Dikarya</taxon>
        <taxon>Ascomycota</taxon>
        <taxon>Saccharomycotina</taxon>
        <taxon>Saccharomycetes</taxon>
        <taxon>Saccharomycetales</taxon>
        <taxon>Saccharomycetaceae</taxon>
        <taxon>Saccharomyces</taxon>
    </lineage>
</organism>
<protein>
    <recommendedName>
        <fullName>Uncharacterized TLC domain-containing protein YPR114W</fullName>
    </recommendedName>
</protein>
<comment type="subcellular location">
    <subcellularLocation>
        <location evidence="3">Endoplasmic reticulum membrane</location>
        <topology evidence="3">Multi-pass membrane protein</topology>
    </subcellularLocation>
</comment>
<comment type="miscellaneous">
    <text evidence="4">Present with 1920 molecules/cell in log phase SD medium.</text>
</comment>